<reference key="1">
    <citation type="journal article" date="1988" name="J. Bacteriol.">
        <title>Molecular cloning, sequencing, and mapping of the bacteriophage T2 dam gene.</title>
        <authorList>
            <person name="Miner Z."/>
            <person name="Hattman S."/>
        </authorList>
    </citation>
    <scope>NUCLEOTIDE SEQUENCE [GENOMIC DNA]</scope>
    <scope>FUNCTION</scope>
</reference>
<reference key="2">
    <citation type="journal article" date="1989" name="Nucleic Acids Res.">
        <title>Single amino acid changes that alter the DNA sequence specificity of the DNA-[N6-adenine] methyltransferase (Dam) of bacteriophage T4.</title>
        <authorList>
            <person name="Miner Z."/>
            <person name="Schlagman S.L."/>
            <person name="Hattman S."/>
        </authorList>
    </citation>
    <scope>FUNCTION</scope>
    <scope>MUTAGENESIS OF PRO-126</scope>
</reference>
<reference key="3">
    <citation type="journal article" date="2003" name="Nucleic Acids Res.">
        <title>A nomenclature for restriction enzymes, DNA methyltransferases, homing endonucleases and their genes.</title>
        <authorList>
            <person name="Roberts R.J."/>
            <person name="Belfort M."/>
            <person name="Bestor T."/>
            <person name="Bhagwat A.S."/>
            <person name="Bickle T.A."/>
            <person name="Bitinaite J."/>
            <person name="Blumenthal R.M."/>
            <person name="Degtyarev S.K."/>
            <person name="Dryden D.T."/>
            <person name="Dybvig K."/>
            <person name="Firman K."/>
            <person name="Gromova E.S."/>
            <person name="Gumport R.I."/>
            <person name="Halford S.E."/>
            <person name="Hattman S."/>
            <person name="Heitman J."/>
            <person name="Hornby D.P."/>
            <person name="Janulaitis A."/>
            <person name="Jeltsch A."/>
            <person name="Josephsen J."/>
            <person name="Kiss A."/>
            <person name="Klaenhammer T.R."/>
            <person name="Kobayashi I."/>
            <person name="Kong H."/>
            <person name="Krueger D.H."/>
            <person name="Lacks S."/>
            <person name="Marinus M.G."/>
            <person name="Miyahara M."/>
            <person name="Morgan R.D."/>
            <person name="Murray N.E."/>
            <person name="Nagaraja V."/>
            <person name="Piekarowicz A."/>
            <person name="Pingoud A."/>
            <person name="Raleigh E."/>
            <person name="Rao D.N."/>
            <person name="Reich N."/>
            <person name="Repin V.E."/>
            <person name="Selker E.U."/>
            <person name="Shaw P.C."/>
            <person name="Stein D.C."/>
            <person name="Stoddard B.L."/>
            <person name="Szybalski W."/>
            <person name="Trautner T.A."/>
            <person name="Van Etten J.L."/>
            <person name="Vitor J.M."/>
            <person name="Wilson G.G."/>
            <person name="Xu S.Y."/>
        </authorList>
    </citation>
    <scope>NOMENCLATURE</scope>
    <scope>SUBTYPE</scope>
</reference>
<organism>
    <name type="scientific">Enterobacteria phage T2</name>
    <name type="common">Bacteriophage T2</name>
    <dbReference type="NCBI Taxonomy" id="2060721"/>
    <lineage>
        <taxon>Viruses</taxon>
        <taxon>Duplodnaviria</taxon>
        <taxon>Heunggongvirae</taxon>
        <taxon>Uroviricota</taxon>
        <taxon>Caudoviricetes</taxon>
        <taxon>Straboviridae</taxon>
        <taxon>Tevenvirinae</taxon>
        <taxon>Tequatrovirus</taxon>
        <taxon>Tequatrovirus T2</taxon>
    </lineage>
</organism>
<feature type="chain" id="PRO_0000087989" description="DNA adenine methylase">
    <location>
        <begin position="1"/>
        <end position="259"/>
    </location>
</feature>
<feature type="binding site" evidence="1">
    <location>
        <position position="7"/>
    </location>
    <ligand>
        <name>S-adenosyl-L-methionine</name>
        <dbReference type="ChEBI" id="CHEBI:59789"/>
    </ligand>
</feature>
<feature type="binding site" evidence="1">
    <location>
        <position position="11"/>
    </location>
    <ligand>
        <name>S-adenosyl-L-methionine</name>
        <dbReference type="ChEBI" id="CHEBI:59789"/>
    </ligand>
</feature>
<feature type="binding site" evidence="1">
    <location>
        <position position="50"/>
    </location>
    <ligand>
        <name>S-adenosyl-L-methionine</name>
        <dbReference type="ChEBI" id="CHEBI:59789"/>
    </ligand>
</feature>
<feature type="binding site" evidence="1">
    <location>
        <position position="171"/>
    </location>
    <ligand>
        <name>S-adenosyl-L-methionine</name>
        <dbReference type="ChEBI" id="CHEBI:59789"/>
    </ligand>
</feature>
<feature type="mutagenesis site" description="In damh; hypermethylating mutant." evidence="6">
    <original>P</original>
    <variation>S</variation>
    <location>
        <position position="126"/>
    </location>
</feature>
<gene>
    <name evidence="4" type="primary">DAM</name>
</gene>
<sequence length="259" mass="30439">MLGAIAYTGNKQSLLPELKPHFPKYDRFVDLFCGGLSVSLNVNGPVLANDIQEPIIEMYKRLINVSWDDVLKVIKQYKLSKTSKEEFLKLREDYNKTRDPLLLYVLHFHGFSNMIRINDKGNFTTPFGKRTINKNSEKRFNHFKQNCDKIIFSSLHFKDVKILDGDFVYVDPPYLITVADYNKFWSEEEEKDLLNLLDSLNDRGIKFGLSNVLEHHGKENTLLKEWSKKYNVKHLNKKYVFNIYHSKEKNGTDEVYIFN</sequence>
<protein>
    <recommendedName>
        <fullName>DNA adenine methylase</fullName>
        <ecNumber>2.1.1.72</ecNumber>
    </recommendedName>
    <alternativeName>
        <fullName evidence="2">DNA-(N(6)-adenine)-methyltransferase</fullName>
    </alternativeName>
    <alternativeName>
        <fullName>Deoxyadenosyl-methyltransferase</fullName>
    </alternativeName>
    <alternativeName>
        <fullName evidence="3">Orphan methyltransferase M.EcoT2Dam</fullName>
        <shortName evidence="3">M.EcoT2Dam</shortName>
    </alternativeName>
</protein>
<comment type="function">
    <text evidence="2 3 6 7">An alpha subtpe methyltransferase that recognizes the double-stranded sequence 5'-GATC-3' and methylates A-2 on both strands (Probable) (PubMed:12654995). May prevent degradation of viral DNA by the host restriction-modification antiviral defense system.</text>
</comment>
<comment type="catalytic activity">
    <reaction>
        <text>a 2'-deoxyadenosine in DNA + S-adenosyl-L-methionine = an N(6)-methyl-2'-deoxyadenosine in DNA + S-adenosyl-L-homocysteine + H(+)</text>
        <dbReference type="Rhea" id="RHEA:15197"/>
        <dbReference type="Rhea" id="RHEA-COMP:12418"/>
        <dbReference type="Rhea" id="RHEA-COMP:12419"/>
        <dbReference type="ChEBI" id="CHEBI:15378"/>
        <dbReference type="ChEBI" id="CHEBI:57856"/>
        <dbReference type="ChEBI" id="CHEBI:59789"/>
        <dbReference type="ChEBI" id="CHEBI:90615"/>
        <dbReference type="ChEBI" id="CHEBI:90616"/>
        <dbReference type="EC" id="2.1.1.72"/>
    </reaction>
</comment>
<comment type="subunit">
    <text evidence="2">Monomer.</text>
</comment>
<comment type="similarity">
    <text evidence="5">Belongs to the N(4)/N(6)-methyltransferase family.</text>
</comment>
<organismHost>
    <name type="scientific">Escherichia coli</name>
    <dbReference type="NCBI Taxonomy" id="562"/>
</organismHost>
<proteinExistence type="inferred from homology"/>
<keyword id="KW-0235">DNA replication</keyword>
<keyword id="KW-0238">DNA-binding</keyword>
<keyword id="KW-0945">Host-virus interaction</keyword>
<keyword id="KW-1090">Inhibition of host innate immune response by virus</keyword>
<keyword id="KW-0489">Methyltransferase</keyword>
<keyword id="KW-1258">Restriction-modification system evasion by virus</keyword>
<keyword id="KW-0949">S-adenosyl-L-methionine</keyword>
<keyword id="KW-0808">Transferase</keyword>
<keyword id="KW-0899">Viral immunoevasion</keyword>
<name>DMA_BPT2</name>
<dbReference type="EC" id="2.1.1.72"/>
<dbReference type="EMBL" id="M22342">
    <property type="protein sequence ID" value="AAA32477.1"/>
    <property type="molecule type" value="Genomic_DNA"/>
</dbReference>
<dbReference type="PIR" id="A30195">
    <property type="entry name" value="XYBPT2"/>
</dbReference>
<dbReference type="SMR" id="P12427"/>
<dbReference type="REBASE" id="2685">
    <property type="entry name" value="M.EcoT2Dam"/>
</dbReference>
<dbReference type="GO" id="GO:1904047">
    <property type="term" value="F:S-adenosyl-L-methionine binding"/>
    <property type="evidence" value="ECO:0007669"/>
    <property type="project" value="TreeGrafter"/>
</dbReference>
<dbReference type="GO" id="GO:0043565">
    <property type="term" value="F:sequence-specific DNA binding"/>
    <property type="evidence" value="ECO:0007669"/>
    <property type="project" value="TreeGrafter"/>
</dbReference>
<dbReference type="GO" id="GO:0009007">
    <property type="term" value="F:site-specific DNA-methyltransferase (adenine-specific) activity"/>
    <property type="evidence" value="ECO:0007669"/>
    <property type="project" value="UniProtKB-EC"/>
</dbReference>
<dbReference type="GO" id="GO:0006260">
    <property type="term" value="P:DNA replication"/>
    <property type="evidence" value="ECO:0007669"/>
    <property type="project" value="UniProtKB-KW"/>
</dbReference>
<dbReference type="GO" id="GO:0009307">
    <property type="term" value="P:DNA restriction-modification system"/>
    <property type="evidence" value="ECO:0007669"/>
    <property type="project" value="InterPro"/>
</dbReference>
<dbReference type="GO" id="GO:0032259">
    <property type="term" value="P:methylation"/>
    <property type="evidence" value="ECO:0007669"/>
    <property type="project" value="UniProtKB-KW"/>
</dbReference>
<dbReference type="GO" id="GO:0006298">
    <property type="term" value="P:mismatch repair"/>
    <property type="evidence" value="ECO:0007669"/>
    <property type="project" value="TreeGrafter"/>
</dbReference>
<dbReference type="GO" id="GO:0099018">
    <property type="term" value="P:symbiont-mediated evasion of host restriction-modification system"/>
    <property type="evidence" value="ECO:0007669"/>
    <property type="project" value="UniProtKB-KW"/>
</dbReference>
<dbReference type="GO" id="GO:0052170">
    <property type="term" value="P:symbiont-mediated suppression of host innate immune response"/>
    <property type="evidence" value="ECO:0007669"/>
    <property type="project" value="UniProtKB-KW"/>
</dbReference>
<dbReference type="Gene3D" id="1.10.1020.10">
    <property type="entry name" value="Adenine-specific Methyltransferase, Domain 2"/>
    <property type="match status" value="1"/>
</dbReference>
<dbReference type="Gene3D" id="3.40.50.150">
    <property type="entry name" value="Vaccinia Virus protein VP39"/>
    <property type="match status" value="1"/>
</dbReference>
<dbReference type="InterPro" id="IPR023095">
    <property type="entry name" value="Ade_MeTrfase_dom_2"/>
</dbReference>
<dbReference type="InterPro" id="IPR002052">
    <property type="entry name" value="DNA_methylase_N6_adenine_CS"/>
</dbReference>
<dbReference type="InterPro" id="IPR012263">
    <property type="entry name" value="M_m6A_EcoRV"/>
</dbReference>
<dbReference type="InterPro" id="IPR012327">
    <property type="entry name" value="MeTrfase_D12"/>
</dbReference>
<dbReference type="InterPro" id="IPR029063">
    <property type="entry name" value="SAM-dependent_MTases_sf"/>
</dbReference>
<dbReference type="NCBIfam" id="TIGR00571">
    <property type="entry name" value="dam"/>
    <property type="match status" value="1"/>
</dbReference>
<dbReference type="PANTHER" id="PTHR30481">
    <property type="entry name" value="DNA ADENINE METHYLASE"/>
    <property type="match status" value="1"/>
</dbReference>
<dbReference type="PANTHER" id="PTHR30481:SF3">
    <property type="entry name" value="DNA ADENINE METHYLASE"/>
    <property type="match status" value="1"/>
</dbReference>
<dbReference type="Pfam" id="PF02086">
    <property type="entry name" value="MethyltransfD12"/>
    <property type="match status" value="1"/>
</dbReference>
<dbReference type="PIRSF" id="PIRSF000398">
    <property type="entry name" value="M_m6A_EcoRV"/>
    <property type="match status" value="1"/>
</dbReference>
<dbReference type="PRINTS" id="PR00505">
    <property type="entry name" value="D12N6MTFRASE"/>
</dbReference>
<dbReference type="SUPFAM" id="SSF53335">
    <property type="entry name" value="S-adenosyl-L-methionine-dependent methyltransferases"/>
    <property type="match status" value="1"/>
</dbReference>
<dbReference type="PROSITE" id="PS00092">
    <property type="entry name" value="N6_MTASE"/>
    <property type="match status" value="1"/>
</dbReference>
<accession>P12427</accession>
<evidence type="ECO:0000250" key="1"/>
<evidence type="ECO:0000250" key="2">
    <source>
        <dbReference type="UniProtKB" id="P04392"/>
    </source>
</evidence>
<evidence type="ECO:0000303" key="3">
    <source>
    </source>
</evidence>
<evidence type="ECO:0000303" key="4">
    <source>
    </source>
</evidence>
<evidence type="ECO:0000305" key="5"/>
<evidence type="ECO:0000305" key="6">
    <source>
    </source>
</evidence>
<evidence type="ECO:0000305" key="7">
    <source>
    </source>
</evidence>